<protein>
    <recommendedName>
        <fullName evidence="1">Protein SlyX homolog</fullName>
    </recommendedName>
</protein>
<sequence length="70" mass="8004">MDNLENRVEELEMKIAFQDGTIEELNTQVIKLNNLLASQQDQLRILLSKLHAVEPSNMASQSEETPPPHY</sequence>
<accession>A8H0R6</accession>
<organism>
    <name type="scientific">Shewanella pealeana (strain ATCC 700345 / ANG-SQ1)</name>
    <dbReference type="NCBI Taxonomy" id="398579"/>
    <lineage>
        <taxon>Bacteria</taxon>
        <taxon>Pseudomonadati</taxon>
        <taxon>Pseudomonadota</taxon>
        <taxon>Gammaproteobacteria</taxon>
        <taxon>Alteromonadales</taxon>
        <taxon>Shewanellaceae</taxon>
        <taxon>Shewanella</taxon>
    </lineage>
</organism>
<reference key="1">
    <citation type="submission" date="2007-10" db="EMBL/GenBank/DDBJ databases">
        <title>Complete sequence of Shewanella pealeana ATCC 700345.</title>
        <authorList>
            <consortium name="US DOE Joint Genome Institute"/>
            <person name="Copeland A."/>
            <person name="Lucas S."/>
            <person name="Lapidus A."/>
            <person name="Barry K."/>
            <person name="Glavina del Rio T."/>
            <person name="Dalin E."/>
            <person name="Tice H."/>
            <person name="Pitluck S."/>
            <person name="Chertkov O."/>
            <person name="Brettin T."/>
            <person name="Bruce D."/>
            <person name="Detter J.C."/>
            <person name="Han C."/>
            <person name="Schmutz J."/>
            <person name="Larimer F."/>
            <person name="Land M."/>
            <person name="Hauser L."/>
            <person name="Kyrpides N."/>
            <person name="Kim E."/>
            <person name="Zhao J.-S.Z."/>
            <person name="Manno D."/>
            <person name="Hawari J."/>
            <person name="Richardson P."/>
        </authorList>
    </citation>
    <scope>NUCLEOTIDE SEQUENCE [LARGE SCALE GENOMIC DNA]</scope>
    <source>
        <strain>ATCC 700345 / ANG-SQ1</strain>
    </source>
</reference>
<gene>
    <name evidence="1" type="primary">slyX</name>
    <name type="ordered locus">Spea_0826</name>
</gene>
<feature type="chain" id="PRO_1000083246" description="Protein SlyX homolog">
    <location>
        <begin position="1"/>
        <end position="70"/>
    </location>
</feature>
<name>SLYX_SHEPA</name>
<evidence type="ECO:0000255" key="1">
    <source>
        <dbReference type="HAMAP-Rule" id="MF_00715"/>
    </source>
</evidence>
<comment type="similarity">
    <text evidence="1">Belongs to the SlyX family.</text>
</comment>
<dbReference type="EMBL" id="CP000851">
    <property type="protein sequence ID" value="ABV86153.1"/>
    <property type="molecule type" value="Genomic_DNA"/>
</dbReference>
<dbReference type="RefSeq" id="WP_012154087.1">
    <property type="nucleotide sequence ID" value="NC_009901.1"/>
</dbReference>
<dbReference type="SMR" id="A8H0R6"/>
<dbReference type="STRING" id="398579.Spea_0826"/>
<dbReference type="KEGG" id="spl:Spea_0826"/>
<dbReference type="eggNOG" id="COG2900">
    <property type="taxonomic scope" value="Bacteria"/>
</dbReference>
<dbReference type="HOGENOM" id="CLU_180796_4_0_6"/>
<dbReference type="OrthoDB" id="5771733at2"/>
<dbReference type="Proteomes" id="UP000002608">
    <property type="component" value="Chromosome"/>
</dbReference>
<dbReference type="Gene3D" id="1.20.5.300">
    <property type="match status" value="1"/>
</dbReference>
<dbReference type="HAMAP" id="MF_00715">
    <property type="entry name" value="SlyX"/>
    <property type="match status" value="1"/>
</dbReference>
<dbReference type="InterPro" id="IPR007236">
    <property type="entry name" value="SlyX"/>
</dbReference>
<dbReference type="PANTHER" id="PTHR36508">
    <property type="entry name" value="PROTEIN SLYX"/>
    <property type="match status" value="1"/>
</dbReference>
<dbReference type="PANTHER" id="PTHR36508:SF1">
    <property type="entry name" value="PROTEIN SLYX"/>
    <property type="match status" value="1"/>
</dbReference>
<dbReference type="Pfam" id="PF04102">
    <property type="entry name" value="SlyX"/>
    <property type="match status" value="1"/>
</dbReference>
<keyword id="KW-1185">Reference proteome</keyword>
<proteinExistence type="inferred from homology"/>